<evidence type="ECO:0000255" key="1">
    <source>
        <dbReference type="HAMAP-Rule" id="MF_00550"/>
    </source>
</evidence>
<protein>
    <recommendedName>
        <fullName evidence="1">Peptidase T</fullName>
        <ecNumber evidence="1">3.4.11.4</ecNumber>
    </recommendedName>
    <alternativeName>
        <fullName evidence="1">Aminotripeptidase</fullName>
        <shortName evidence="1">Tripeptidase</shortName>
    </alternativeName>
    <alternativeName>
        <fullName evidence="1">Tripeptide aminopeptidase</fullName>
    </alternativeName>
</protein>
<dbReference type="EC" id="3.4.11.4" evidence="1"/>
<dbReference type="EMBL" id="CP001215">
    <property type="protein sequence ID" value="ACP12135.1"/>
    <property type="molecule type" value="Genomic_DNA"/>
</dbReference>
<dbReference type="RefSeq" id="WP_000656974.1">
    <property type="nucleotide sequence ID" value="NC_012581.1"/>
</dbReference>
<dbReference type="SMR" id="C3L855"/>
<dbReference type="MEROPS" id="M20.003"/>
<dbReference type="GeneID" id="45023569"/>
<dbReference type="KEGG" id="bah:BAMEG_0759"/>
<dbReference type="HOGENOM" id="CLU_053676_0_0_9"/>
<dbReference type="GO" id="GO:0005829">
    <property type="term" value="C:cytosol"/>
    <property type="evidence" value="ECO:0007669"/>
    <property type="project" value="TreeGrafter"/>
</dbReference>
<dbReference type="GO" id="GO:0008237">
    <property type="term" value="F:metallopeptidase activity"/>
    <property type="evidence" value="ECO:0007669"/>
    <property type="project" value="UniProtKB-KW"/>
</dbReference>
<dbReference type="GO" id="GO:0045148">
    <property type="term" value="F:tripeptide aminopeptidase activity"/>
    <property type="evidence" value="ECO:0007669"/>
    <property type="project" value="UniProtKB-UniRule"/>
</dbReference>
<dbReference type="GO" id="GO:0008270">
    <property type="term" value="F:zinc ion binding"/>
    <property type="evidence" value="ECO:0007669"/>
    <property type="project" value="UniProtKB-UniRule"/>
</dbReference>
<dbReference type="GO" id="GO:0043171">
    <property type="term" value="P:peptide catabolic process"/>
    <property type="evidence" value="ECO:0007669"/>
    <property type="project" value="UniProtKB-UniRule"/>
</dbReference>
<dbReference type="GO" id="GO:0006508">
    <property type="term" value="P:proteolysis"/>
    <property type="evidence" value="ECO:0007669"/>
    <property type="project" value="UniProtKB-UniRule"/>
</dbReference>
<dbReference type="CDD" id="cd03892">
    <property type="entry name" value="M20_peptT"/>
    <property type="match status" value="1"/>
</dbReference>
<dbReference type="FunFam" id="3.30.70.360:FF:000002">
    <property type="entry name" value="Peptidase T"/>
    <property type="match status" value="1"/>
</dbReference>
<dbReference type="Gene3D" id="3.30.70.360">
    <property type="match status" value="1"/>
</dbReference>
<dbReference type="Gene3D" id="3.40.630.10">
    <property type="entry name" value="Zn peptidases"/>
    <property type="match status" value="1"/>
</dbReference>
<dbReference type="HAMAP" id="MF_00550">
    <property type="entry name" value="Aminopeptidase_M20"/>
    <property type="match status" value="1"/>
</dbReference>
<dbReference type="InterPro" id="IPR001261">
    <property type="entry name" value="ArgE/DapE_CS"/>
</dbReference>
<dbReference type="InterPro" id="IPR036264">
    <property type="entry name" value="Bact_exopeptidase_dim_dom"/>
</dbReference>
<dbReference type="InterPro" id="IPR002933">
    <property type="entry name" value="Peptidase_M20"/>
</dbReference>
<dbReference type="InterPro" id="IPR011650">
    <property type="entry name" value="Peptidase_M20_dimer"/>
</dbReference>
<dbReference type="InterPro" id="IPR010161">
    <property type="entry name" value="Peptidase_M20B"/>
</dbReference>
<dbReference type="NCBIfam" id="TIGR01882">
    <property type="entry name" value="peptidase-T"/>
    <property type="match status" value="1"/>
</dbReference>
<dbReference type="NCBIfam" id="NF003976">
    <property type="entry name" value="PRK05469.1"/>
    <property type="match status" value="1"/>
</dbReference>
<dbReference type="NCBIfam" id="NF009920">
    <property type="entry name" value="PRK13381.1"/>
    <property type="match status" value="1"/>
</dbReference>
<dbReference type="PANTHER" id="PTHR42994">
    <property type="entry name" value="PEPTIDASE T"/>
    <property type="match status" value="1"/>
</dbReference>
<dbReference type="PANTHER" id="PTHR42994:SF1">
    <property type="entry name" value="PEPTIDASE T"/>
    <property type="match status" value="1"/>
</dbReference>
<dbReference type="Pfam" id="PF07687">
    <property type="entry name" value="M20_dimer"/>
    <property type="match status" value="1"/>
</dbReference>
<dbReference type="Pfam" id="PF01546">
    <property type="entry name" value="Peptidase_M20"/>
    <property type="match status" value="1"/>
</dbReference>
<dbReference type="PIRSF" id="PIRSF037215">
    <property type="entry name" value="Peptidase_M20B"/>
    <property type="match status" value="1"/>
</dbReference>
<dbReference type="SUPFAM" id="SSF55031">
    <property type="entry name" value="Bacterial exopeptidase dimerisation domain"/>
    <property type="match status" value="1"/>
</dbReference>
<dbReference type="SUPFAM" id="SSF53187">
    <property type="entry name" value="Zn-dependent exopeptidases"/>
    <property type="match status" value="1"/>
</dbReference>
<dbReference type="PROSITE" id="PS00758">
    <property type="entry name" value="ARGE_DAPE_CPG2_1"/>
    <property type="match status" value="1"/>
</dbReference>
<dbReference type="PROSITE" id="PS00759">
    <property type="entry name" value="ARGE_DAPE_CPG2_2"/>
    <property type="match status" value="1"/>
</dbReference>
<gene>
    <name evidence="1" type="primary">pepT</name>
    <name type="ordered locus">BAMEG_0759</name>
</gene>
<accession>C3L855</accession>
<organism>
    <name type="scientific">Bacillus anthracis (strain CDC 684 / NRRL 3495)</name>
    <dbReference type="NCBI Taxonomy" id="568206"/>
    <lineage>
        <taxon>Bacteria</taxon>
        <taxon>Bacillati</taxon>
        <taxon>Bacillota</taxon>
        <taxon>Bacilli</taxon>
        <taxon>Bacillales</taxon>
        <taxon>Bacillaceae</taxon>
        <taxon>Bacillus</taxon>
        <taxon>Bacillus cereus group</taxon>
    </lineage>
</organism>
<reference key="1">
    <citation type="submission" date="2008-10" db="EMBL/GenBank/DDBJ databases">
        <title>Genome sequence of Bacillus anthracis str. CDC 684.</title>
        <authorList>
            <person name="Dodson R.J."/>
            <person name="Munk A.C."/>
            <person name="Brettin T."/>
            <person name="Bruce D."/>
            <person name="Detter C."/>
            <person name="Tapia R."/>
            <person name="Han C."/>
            <person name="Sutton G."/>
            <person name="Sims D."/>
        </authorList>
    </citation>
    <scope>NUCLEOTIDE SEQUENCE [LARGE SCALE GENOMIC DNA]</scope>
    <source>
        <strain>CDC 684 / NRRL 3495</strain>
    </source>
</reference>
<proteinExistence type="inferred from homology"/>
<keyword id="KW-0031">Aminopeptidase</keyword>
<keyword id="KW-0963">Cytoplasm</keyword>
<keyword id="KW-0378">Hydrolase</keyword>
<keyword id="KW-0479">Metal-binding</keyword>
<keyword id="KW-0482">Metalloprotease</keyword>
<keyword id="KW-0645">Protease</keyword>
<keyword id="KW-0862">Zinc</keyword>
<feature type="chain" id="PRO_1000200882" description="Peptidase T">
    <location>
        <begin position="1"/>
        <end position="410"/>
    </location>
</feature>
<feature type="active site" evidence="1">
    <location>
        <position position="81"/>
    </location>
</feature>
<feature type="active site" description="Proton acceptor" evidence="1">
    <location>
        <position position="176"/>
    </location>
</feature>
<feature type="binding site" evidence="1">
    <location>
        <position position="79"/>
    </location>
    <ligand>
        <name>Zn(2+)</name>
        <dbReference type="ChEBI" id="CHEBI:29105"/>
        <label>1</label>
    </ligand>
</feature>
<feature type="binding site" evidence="1">
    <location>
        <position position="142"/>
    </location>
    <ligand>
        <name>Zn(2+)</name>
        <dbReference type="ChEBI" id="CHEBI:29105"/>
        <label>1</label>
    </ligand>
</feature>
<feature type="binding site" evidence="1">
    <location>
        <position position="142"/>
    </location>
    <ligand>
        <name>Zn(2+)</name>
        <dbReference type="ChEBI" id="CHEBI:29105"/>
        <label>2</label>
    </ligand>
</feature>
<feature type="binding site" evidence="1">
    <location>
        <position position="177"/>
    </location>
    <ligand>
        <name>Zn(2+)</name>
        <dbReference type="ChEBI" id="CHEBI:29105"/>
        <label>2</label>
    </ligand>
</feature>
<feature type="binding site" evidence="1">
    <location>
        <position position="199"/>
    </location>
    <ligand>
        <name>Zn(2+)</name>
        <dbReference type="ChEBI" id="CHEBI:29105"/>
        <label>1</label>
    </ligand>
</feature>
<feature type="binding site" evidence="1">
    <location>
        <position position="381"/>
    </location>
    <ligand>
        <name>Zn(2+)</name>
        <dbReference type="ChEBI" id="CHEBI:29105"/>
        <label>2</label>
    </ligand>
</feature>
<sequence>MKEELIERFTRYVKIDTQSNEDSHTVPTTPGQIEFGKLLVEELKEVGLTEVTMDDNGYVMATLPANTDKDVPVIGFLAHLDTATDFTGKNVKPQIHENFDGNAITLNEELNIVLTPEQFPELPSYKGHTIITTDGTTLLGADDKAGLTEIMVAMNYLIHNPQIKHGKIRVAFTPDEEIGRGPAHFDVEAFGASFAYMMDGGPLGGLEYESFNAAGAKLTFNGTNTHPGTAKNKMRNATKLAMEFNGHLPVEEAPEYTEGYEGFYHLLSLNGDVEQSKAYYIIRDFDRKNFEARKNTIENIVKQMQEKYGQDAVVLEMNDQYYNMLEKIEPVREIVDIAYEAMKSLNIEPNIHPIRGGTDGSQLSYMGLPTPNIFTGGENYHGKFEYVSVDVMEKAVQVIIEIARRFEEQA</sequence>
<comment type="function">
    <text evidence="1">Cleaves the N-terminal amino acid of tripeptides.</text>
</comment>
<comment type="catalytic activity">
    <reaction evidence="1">
        <text>Release of the N-terminal residue from a tripeptide.</text>
        <dbReference type="EC" id="3.4.11.4"/>
    </reaction>
</comment>
<comment type="cofactor">
    <cofactor evidence="1">
        <name>Zn(2+)</name>
        <dbReference type="ChEBI" id="CHEBI:29105"/>
    </cofactor>
    <text evidence="1">Binds 2 Zn(2+) ions per subunit.</text>
</comment>
<comment type="subcellular location">
    <subcellularLocation>
        <location evidence="1">Cytoplasm</location>
    </subcellularLocation>
</comment>
<comment type="similarity">
    <text evidence="1">Belongs to the peptidase M20B family.</text>
</comment>
<name>PEPT_BACAC</name>